<organism>
    <name type="scientific">Rickettsia typhi (strain ATCC VR-144 / Wilmington)</name>
    <dbReference type="NCBI Taxonomy" id="257363"/>
    <lineage>
        <taxon>Bacteria</taxon>
        <taxon>Pseudomonadati</taxon>
        <taxon>Pseudomonadota</taxon>
        <taxon>Alphaproteobacteria</taxon>
        <taxon>Rickettsiales</taxon>
        <taxon>Rickettsiaceae</taxon>
        <taxon>Rickettsieae</taxon>
        <taxon>Rickettsia</taxon>
        <taxon>typhus group</taxon>
    </lineage>
</organism>
<reference key="1">
    <citation type="journal article" date="2004" name="J. Bacteriol.">
        <title>Complete genome sequence of Rickettsia typhi and comparison with sequences of other Rickettsiae.</title>
        <authorList>
            <person name="McLeod M.P."/>
            <person name="Qin X."/>
            <person name="Karpathy S.E."/>
            <person name="Gioia J."/>
            <person name="Highlander S.K."/>
            <person name="Fox G.E."/>
            <person name="McNeill T.Z."/>
            <person name="Jiang H."/>
            <person name="Muzny D."/>
            <person name="Jacob L.S."/>
            <person name="Hawes A.C."/>
            <person name="Sodergren E."/>
            <person name="Gill R."/>
            <person name="Hume J."/>
            <person name="Morgan M."/>
            <person name="Fan G."/>
            <person name="Amin A.G."/>
            <person name="Gibbs R.A."/>
            <person name="Hong C."/>
            <person name="Yu X.-J."/>
            <person name="Walker D.H."/>
            <person name="Weinstock G.M."/>
        </authorList>
    </citation>
    <scope>NUCLEOTIDE SEQUENCE [LARGE SCALE GENOMIC DNA]</scope>
    <source>
        <strain>ATCC VR-144 / Wilmington</strain>
    </source>
</reference>
<protein>
    <recommendedName>
        <fullName evidence="1">Large ribosomal subunit protein bL20</fullName>
    </recommendedName>
    <alternativeName>
        <fullName evidence="2">50S ribosomal protein L20</fullName>
    </alternativeName>
</protein>
<proteinExistence type="inferred from homology"/>
<gene>
    <name evidence="1" type="primary">rplT</name>
    <name type="ordered locus">RT0597</name>
</gene>
<feature type="chain" id="PRO_0000177218" description="Large ribosomal subunit protein bL20">
    <location>
        <begin position="1"/>
        <end position="117"/>
    </location>
</feature>
<keyword id="KW-0687">Ribonucleoprotein</keyword>
<keyword id="KW-0689">Ribosomal protein</keyword>
<keyword id="KW-0694">RNA-binding</keyword>
<keyword id="KW-0699">rRNA-binding</keyword>
<name>RL20_RICTY</name>
<accession>Q68WD0</accession>
<sequence>MTRAKSGKISKKRHKKILKLAKGYRGRANSCFRVAIEKVEKALLYAYRDRRNRKRDFRGLWIQRINAAVREHGLIYSQFMGALKKAGINIDRKVLAELAVNNNDGFTSIVQQSKAYI</sequence>
<evidence type="ECO:0000255" key="1">
    <source>
        <dbReference type="HAMAP-Rule" id="MF_00382"/>
    </source>
</evidence>
<evidence type="ECO:0000305" key="2"/>
<comment type="function">
    <text evidence="1">Binds directly to 23S ribosomal RNA and is necessary for the in vitro assembly process of the 50S ribosomal subunit. It is not involved in the protein synthesizing functions of that subunit.</text>
</comment>
<comment type="similarity">
    <text evidence="1">Belongs to the bacterial ribosomal protein bL20 family.</text>
</comment>
<dbReference type="EMBL" id="AE017197">
    <property type="protein sequence ID" value="AAU04062.1"/>
    <property type="molecule type" value="Genomic_DNA"/>
</dbReference>
<dbReference type="RefSeq" id="WP_011191043.1">
    <property type="nucleotide sequence ID" value="NC_006142.1"/>
</dbReference>
<dbReference type="SMR" id="Q68WD0"/>
<dbReference type="KEGG" id="rty:RT0597"/>
<dbReference type="eggNOG" id="COG0292">
    <property type="taxonomic scope" value="Bacteria"/>
</dbReference>
<dbReference type="HOGENOM" id="CLU_123265_0_1_5"/>
<dbReference type="OrthoDB" id="9808966at2"/>
<dbReference type="Proteomes" id="UP000000604">
    <property type="component" value="Chromosome"/>
</dbReference>
<dbReference type="GO" id="GO:1990904">
    <property type="term" value="C:ribonucleoprotein complex"/>
    <property type="evidence" value="ECO:0007669"/>
    <property type="project" value="UniProtKB-KW"/>
</dbReference>
<dbReference type="GO" id="GO:0005840">
    <property type="term" value="C:ribosome"/>
    <property type="evidence" value="ECO:0007669"/>
    <property type="project" value="UniProtKB-KW"/>
</dbReference>
<dbReference type="GO" id="GO:0019843">
    <property type="term" value="F:rRNA binding"/>
    <property type="evidence" value="ECO:0007669"/>
    <property type="project" value="UniProtKB-UniRule"/>
</dbReference>
<dbReference type="GO" id="GO:0003735">
    <property type="term" value="F:structural constituent of ribosome"/>
    <property type="evidence" value="ECO:0007669"/>
    <property type="project" value="InterPro"/>
</dbReference>
<dbReference type="GO" id="GO:0000027">
    <property type="term" value="P:ribosomal large subunit assembly"/>
    <property type="evidence" value="ECO:0007669"/>
    <property type="project" value="UniProtKB-UniRule"/>
</dbReference>
<dbReference type="GO" id="GO:0006412">
    <property type="term" value="P:translation"/>
    <property type="evidence" value="ECO:0007669"/>
    <property type="project" value="InterPro"/>
</dbReference>
<dbReference type="CDD" id="cd07026">
    <property type="entry name" value="Ribosomal_L20"/>
    <property type="match status" value="1"/>
</dbReference>
<dbReference type="FunFam" id="1.10.1900.20:FF:000001">
    <property type="entry name" value="50S ribosomal protein L20"/>
    <property type="match status" value="1"/>
</dbReference>
<dbReference type="Gene3D" id="6.10.160.10">
    <property type="match status" value="1"/>
</dbReference>
<dbReference type="Gene3D" id="1.10.1900.20">
    <property type="entry name" value="Ribosomal protein L20"/>
    <property type="match status" value="1"/>
</dbReference>
<dbReference type="HAMAP" id="MF_00382">
    <property type="entry name" value="Ribosomal_bL20"/>
    <property type="match status" value="1"/>
</dbReference>
<dbReference type="InterPro" id="IPR005813">
    <property type="entry name" value="Ribosomal_bL20"/>
</dbReference>
<dbReference type="InterPro" id="IPR049946">
    <property type="entry name" value="RIBOSOMAL_L20_CS"/>
</dbReference>
<dbReference type="InterPro" id="IPR035566">
    <property type="entry name" value="Ribosomal_protein_bL20_C"/>
</dbReference>
<dbReference type="NCBIfam" id="TIGR01032">
    <property type="entry name" value="rplT_bact"/>
    <property type="match status" value="1"/>
</dbReference>
<dbReference type="PANTHER" id="PTHR10986">
    <property type="entry name" value="39S RIBOSOMAL PROTEIN L20"/>
    <property type="match status" value="1"/>
</dbReference>
<dbReference type="Pfam" id="PF00453">
    <property type="entry name" value="Ribosomal_L20"/>
    <property type="match status" value="1"/>
</dbReference>
<dbReference type="PRINTS" id="PR00062">
    <property type="entry name" value="RIBOSOMALL20"/>
</dbReference>
<dbReference type="SUPFAM" id="SSF74731">
    <property type="entry name" value="Ribosomal protein L20"/>
    <property type="match status" value="1"/>
</dbReference>
<dbReference type="PROSITE" id="PS00937">
    <property type="entry name" value="RIBOSOMAL_L20"/>
    <property type="match status" value="1"/>
</dbReference>